<sequence>MTNVTPMMQQYLKIKSQYQDCLLFFRLGDFYEMFFEDAKEASRVLEITLTKRDAKKENPIPMCGVPYHSAESYIETLINEGYKVAICEQMEDPKTTKGMVKREVIRVVTPGTIMNQGGMDEKQNNYILSFIKDGATIAVSYCDVSTGELKVTKFNDESMLLNEITTINPNEIVAADQVSESLKQQMSLATETITVVDEISNEAYEVNQVEDTLMHQAVQLLLDYIHHTQKRNMNHIEDAQVYEAIDYMKMDYYAKRNLELTESIRLKSKKGTLLWLMDETKTPMGARRLKQWIDRPLIYKQAINERLDAVSQLIDRFIERDTLRNYLNQVYDIERLVGRVSYGNVNARDLIQLKHSIAEIPNIKALLDDFDDALPEQFRQLEPLNDLLDLLEKSLVEEPPISVKDGGLFKQGFNQQLDEYLEASVNGKQWLAQLQAKERERTGIKSLKISFNKVFGYFIEITRANLKGFEPADFGYNRKQTLSNAERFITDELKEKEDIILGAEDKAVELEYQLFAQLREEVKAYTERLQKQAKLISEIDCLQSFAEIAQKYNYVRPEFSDDKTLDLVDSRHPVVERVMDYNDYVPNDCRLDDDQFIYLITGPNMSGKSTYMRQVAIISIMAQMGAYVPCGSAVLPIFDQIFTRIGAADDLVSGKSTFMVEMLEAQKALTYATEDSLIIFDEIGRGTSTFDGLALAQAMIEYVAETSHAKTLFSTHYHELTTLDQSLECLKNVHVAANEYQGELIFLHKVKDGAVDDSYGIQVAKLADLPDRVIERAQVILDAFEEKDKPQPQISHLQQTESFVREPEIEDIQDKKEPETEQFQQGAFDLFETPPVESEIEAELKKINISNMTPLQALNKLSELQNQLK</sequence>
<keyword id="KW-0067">ATP-binding</keyword>
<keyword id="KW-0227">DNA damage</keyword>
<keyword id="KW-0234">DNA repair</keyword>
<keyword id="KW-0238">DNA-binding</keyword>
<keyword id="KW-0547">Nucleotide-binding</keyword>
<keyword id="KW-1185">Reference proteome</keyword>
<comment type="function">
    <text evidence="1">This protein is involved in the repair of mismatches in DNA. It is possible that it carries out the mismatch recognition step. This protein has a weak ATPase activity.</text>
</comment>
<comment type="similarity">
    <text evidence="1">Belongs to the DNA mismatch repair MutS family.</text>
</comment>
<reference key="1">
    <citation type="journal article" date="2009" name="Appl. Environ. Microbiol.">
        <title>Genome analysis of the meat starter culture bacterium Staphylococcus carnosus TM300.</title>
        <authorList>
            <person name="Rosenstein R."/>
            <person name="Nerz C."/>
            <person name="Biswas L."/>
            <person name="Resch A."/>
            <person name="Raddatz G."/>
            <person name="Schuster S.C."/>
            <person name="Goetz F."/>
        </authorList>
    </citation>
    <scope>NUCLEOTIDE SEQUENCE [LARGE SCALE GENOMIC DNA]</scope>
    <source>
        <strain>TM300</strain>
    </source>
</reference>
<proteinExistence type="inferred from homology"/>
<gene>
    <name evidence="1" type="primary">mutS</name>
    <name type="ordered locus">Sca_0945</name>
</gene>
<evidence type="ECO:0000255" key="1">
    <source>
        <dbReference type="HAMAP-Rule" id="MF_00096"/>
    </source>
</evidence>
<feature type="chain" id="PRO_1000192202" description="DNA mismatch repair protein MutS">
    <location>
        <begin position="1"/>
        <end position="869"/>
    </location>
</feature>
<feature type="binding site" evidence="1">
    <location>
        <begin position="602"/>
        <end position="609"/>
    </location>
    <ligand>
        <name>ATP</name>
        <dbReference type="ChEBI" id="CHEBI:30616"/>
    </ligand>
</feature>
<name>MUTS_STACT</name>
<organism>
    <name type="scientific">Staphylococcus carnosus (strain TM300)</name>
    <dbReference type="NCBI Taxonomy" id="396513"/>
    <lineage>
        <taxon>Bacteria</taxon>
        <taxon>Bacillati</taxon>
        <taxon>Bacillota</taxon>
        <taxon>Bacilli</taxon>
        <taxon>Bacillales</taxon>
        <taxon>Staphylococcaceae</taxon>
        <taxon>Staphylococcus</taxon>
    </lineage>
</organism>
<protein>
    <recommendedName>
        <fullName evidence="1">DNA mismatch repair protein MutS</fullName>
    </recommendedName>
</protein>
<accession>B9DPB9</accession>
<dbReference type="EMBL" id="AM295250">
    <property type="protein sequence ID" value="CAL27853.1"/>
    <property type="molecule type" value="Genomic_DNA"/>
</dbReference>
<dbReference type="RefSeq" id="WP_015900194.1">
    <property type="nucleotide sequence ID" value="NC_012121.1"/>
</dbReference>
<dbReference type="SMR" id="B9DPB9"/>
<dbReference type="GeneID" id="93793373"/>
<dbReference type="KEGG" id="sca:SCA_0945"/>
<dbReference type="eggNOG" id="COG0249">
    <property type="taxonomic scope" value="Bacteria"/>
</dbReference>
<dbReference type="HOGENOM" id="CLU_002472_4_0_9"/>
<dbReference type="OrthoDB" id="9802448at2"/>
<dbReference type="BioCyc" id="SCAR396513:SCA_RS04755-MONOMER"/>
<dbReference type="Proteomes" id="UP000000444">
    <property type="component" value="Chromosome"/>
</dbReference>
<dbReference type="GO" id="GO:0005829">
    <property type="term" value="C:cytosol"/>
    <property type="evidence" value="ECO:0007669"/>
    <property type="project" value="TreeGrafter"/>
</dbReference>
<dbReference type="GO" id="GO:0005524">
    <property type="term" value="F:ATP binding"/>
    <property type="evidence" value="ECO:0007669"/>
    <property type="project" value="UniProtKB-UniRule"/>
</dbReference>
<dbReference type="GO" id="GO:0140664">
    <property type="term" value="F:ATP-dependent DNA damage sensor activity"/>
    <property type="evidence" value="ECO:0007669"/>
    <property type="project" value="InterPro"/>
</dbReference>
<dbReference type="GO" id="GO:0003684">
    <property type="term" value="F:damaged DNA binding"/>
    <property type="evidence" value="ECO:0007669"/>
    <property type="project" value="UniProtKB-UniRule"/>
</dbReference>
<dbReference type="GO" id="GO:0030983">
    <property type="term" value="F:mismatched DNA binding"/>
    <property type="evidence" value="ECO:0007669"/>
    <property type="project" value="InterPro"/>
</dbReference>
<dbReference type="GO" id="GO:0006298">
    <property type="term" value="P:mismatch repair"/>
    <property type="evidence" value="ECO:0007669"/>
    <property type="project" value="UniProtKB-UniRule"/>
</dbReference>
<dbReference type="CDD" id="cd03284">
    <property type="entry name" value="ABC_MutS1"/>
    <property type="match status" value="1"/>
</dbReference>
<dbReference type="FunFam" id="1.10.1420.10:FF:000007">
    <property type="entry name" value="DNA mismatch repair protein MutS"/>
    <property type="match status" value="1"/>
</dbReference>
<dbReference type="FunFam" id="3.40.1170.10:FF:000001">
    <property type="entry name" value="DNA mismatch repair protein MutS"/>
    <property type="match status" value="1"/>
</dbReference>
<dbReference type="FunFam" id="3.40.50.300:FF:000896">
    <property type="entry name" value="DNA mismatch repair protein MutS"/>
    <property type="match status" value="1"/>
</dbReference>
<dbReference type="Gene3D" id="1.10.1420.10">
    <property type="match status" value="2"/>
</dbReference>
<dbReference type="Gene3D" id="3.40.1170.10">
    <property type="entry name" value="DNA repair protein MutS, domain I"/>
    <property type="match status" value="1"/>
</dbReference>
<dbReference type="Gene3D" id="3.30.420.110">
    <property type="entry name" value="MutS, connector domain"/>
    <property type="match status" value="1"/>
</dbReference>
<dbReference type="Gene3D" id="3.40.50.300">
    <property type="entry name" value="P-loop containing nucleotide triphosphate hydrolases"/>
    <property type="match status" value="1"/>
</dbReference>
<dbReference type="HAMAP" id="MF_00096">
    <property type="entry name" value="MutS"/>
    <property type="match status" value="1"/>
</dbReference>
<dbReference type="InterPro" id="IPR005748">
    <property type="entry name" value="DNA_mismatch_repair_MutS"/>
</dbReference>
<dbReference type="InterPro" id="IPR007695">
    <property type="entry name" value="DNA_mismatch_repair_MutS-lik_N"/>
</dbReference>
<dbReference type="InterPro" id="IPR017261">
    <property type="entry name" value="DNA_mismatch_repair_MutS/MSH"/>
</dbReference>
<dbReference type="InterPro" id="IPR000432">
    <property type="entry name" value="DNA_mismatch_repair_MutS_C"/>
</dbReference>
<dbReference type="InterPro" id="IPR007861">
    <property type="entry name" value="DNA_mismatch_repair_MutS_clamp"/>
</dbReference>
<dbReference type="InterPro" id="IPR007696">
    <property type="entry name" value="DNA_mismatch_repair_MutS_core"/>
</dbReference>
<dbReference type="InterPro" id="IPR016151">
    <property type="entry name" value="DNA_mismatch_repair_MutS_N"/>
</dbReference>
<dbReference type="InterPro" id="IPR036187">
    <property type="entry name" value="DNA_mismatch_repair_MutS_sf"/>
</dbReference>
<dbReference type="InterPro" id="IPR007860">
    <property type="entry name" value="DNA_mmatch_repair_MutS_con_dom"/>
</dbReference>
<dbReference type="InterPro" id="IPR045076">
    <property type="entry name" value="MutS"/>
</dbReference>
<dbReference type="InterPro" id="IPR036678">
    <property type="entry name" value="MutS_con_dom_sf"/>
</dbReference>
<dbReference type="InterPro" id="IPR027417">
    <property type="entry name" value="P-loop_NTPase"/>
</dbReference>
<dbReference type="NCBIfam" id="TIGR01070">
    <property type="entry name" value="mutS1"/>
    <property type="match status" value="1"/>
</dbReference>
<dbReference type="NCBIfam" id="NF003810">
    <property type="entry name" value="PRK05399.1"/>
    <property type="match status" value="1"/>
</dbReference>
<dbReference type="PANTHER" id="PTHR11361:SF34">
    <property type="entry name" value="DNA MISMATCH REPAIR PROTEIN MSH1, MITOCHONDRIAL"/>
    <property type="match status" value="1"/>
</dbReference>
<dbReference type="PANTHER" id="PTHR11361">
    <property type="entry name" value="DNA MISMATCH REPAIR PROTEIN MUTS FAMILY MEMBER"/>
    <property type="match status" value="1"/>
</dbReference>
<dbReference type="Pfam" id="PF01624">
    <property type="entry name" value="MutS_I"/>
    <property type="match status" value="1"/>
</dbReference>
<dbReference type="Pfam" id="PF05188">
    <property type="entry name" value="MutS_II"/>
    <property type="match status" value="1"/>
</dbReference>
<dbReference type="Pfam" id="PF05192">
    <property type="entry name" value="MutS_III"/>
    <property type="match status" value="1"/>
</dbReference>
<dbReference type="Pfam" id="PF05190">
    <property type="entry name" value="MutS_IV"/>
    <property type="match status" value="1"/>
</dbReference>
<dbReference type="Pfam" id="PF00488">
    <property type="entry name" value="MutS_V"/>
    <property type="match status" value="1"/>
</dbReference>
<dbReference type="PIRSF" id="PIRSF037677">
    <property type="entry name" value="DNA_mis_repair_Msh6"/>
    <property type="match status" value="1"/>
</dbReference>
<dbReference type="SMART" id="SM00534">
    <property type="entry name" value="MUTSac"/>
    <property type="match status" value="1"/>
</dbReference>
<dbReference type="SMART" id="SM00533">
    <property type="entry name" value="MUTSd"/>
    <property type="match status" value="1"/>
</dbReference>
<dbReference type="SUPFAM" id="SSF55271">
    <property type="entry name" value="DNA repair protein MutS, domain I"/>
    <property type="match status" value="1"/>
</dbReference>
<dbReference type="SUPFAM" id="SSF53150">
    <property type="entry name" value="DNA repair protein MutS, domain II"/>
    <property type="match status" value="1"/>
</dbReference>
<dbReference type="SUPFAM" id="SSF48334">
    <property type="entry name" value="DNA repair protein MutS, domain III"/>
    <property type="match status" value="1"/>
</dbReference>
<dbReference type="SUPFAM" id="SSF52540">
    <property type="entry name" value="P-loop containing nucleoside triphosphate hydrolases"/>
    <property type="match status" value="1"/>
</dbReference>
<dbReference type="PROSITE" id="PS00486">
    <property type="entry name" value="DNA_MISMATCH_REPAIR_2"/>
    <property type="match status" value="1"/>
</dbReference>